<protein>
    <recommendedName>
        <fullName>Arylamine N-acetyltransferase, pineal gland isozyme NAT-10</fullName>
        <shortName>Arylamine acetylase</shortName>
        <ecNumber>2.3.1.5</ecNumber>
    </recommendedName>
</protein>
<comment type="catalytic activity">
    <reaction>
        <text>an arylamine + acetyl-CoA = an N-acetylarylamine + CoA</text>
        <dbReference type="Rhea" id="RHEA:16613"/>
        <dbReference type="ChEBI" id="CHEBI:13790"/>
        <dbReference type="ChEBI" id="CHEBI:50471"/>
        <dbReference type="ChEBI" id="CHEBI:57287"/>
        <dbReference type="ChEBI" id="CHEBI:57288"/>
        <dbReference type="EC" id="2.3.1.5"/>
    </reaction>
</comment>
<comment type="similarity">
    <text evidence="2">Belongs to the arylamine N-acetyltransferase family.</text>
</comment>
<feature type="chain" id="PRO_0000107901" description="Arylamine N-acetyltransferase, pineal gland isozyme NAT-10">
    <location>
        <begin position="1"/>
        <end position="290"/>
    </location>
</feature>
<feature type="active site" description="Acyl-thioester intermediate" evidence="1">
    <location>
        <position position="68"/>
    </location>
</feature>
<feature type="active site" evidence="1">
    <location>
        <position position="107"/>
    </location>
</feature>
<feature type="active site" evidence="1">
    <location>
        <position position="122"/>
    </location>
</feature>
<sequence length="290" mass="33925">MNLEEYFARTGYKGSLENQDLETLTDIFQHHIRAVPFENLSIHCGEKITLELEHVYNKIVHKKRGGWCMENNQLLGWVLKCLGYDTSFLGAYVFNPHENAYATIMTHLLVKVVIEGKAYIVDAGFGVSYQMWQPMELVSGKDQPQAPGIFRFTEKNAIWYLEKMRRKQYIPNQNFSNSDLLEKKDCRKVYMFSLEPRTVEDFCFQCTYLQTSPDSLFTKKSICTLQTTDGFRALIGWTLTETKYNYKENMDLVEFITLKDEEVEKTLKDKFNITLERKLVPINVKGFYTI</sequence>
<proteinExistence type="evidence at transcript level"/>
<organism>
    <name type="scientific">Gallus gallus</name>
    <name type="common">Chicken</name>
    <dbReference type="NCBI Taxonomy" id="9031"/>
    <lineage>
        <taxon>Eukaryota</taxon>
        <taxon>Metazoa</taxon>
        <taxon>Chordata</taxon>
        <taxon>Craniata</taxon>
        <taxon>Vertebrata</taxon>
        <taxon>Euteleostomi</taxon>
        <taxon>Archelosauria</taxon>
        <taxon>Archosauria</taxon>
        <taxon>Dinosauria</taxon>
        <taxon>Saurischia</taxon>
        <taxon>Theropoda</taxon>
        <taxon>Coelurosauria</taxon>
        <taxon>Aves</taxon>
        <taxon>Neognathae</taxon>
        <taxon>Galloanserae</taxon>
        <taxon>Galliformes</taxon>
        <taxon>Phasianidae</taxon>
        <taxon>Phasianinae</taxon>
        <taxon>Gallus</taxon>
    </lineage>
</organism>
<reference key="1">
    <citation type="journal article" date="1989" name="Eur. J. Biochem.">
        <title>Two arylamine N-acetyltransferases from chicken pineal gland as identified by cDNA cloning.</title>
        <authorList>
            <person name="Ohtomi M."/>
            <person name="Sasaki M."/>
            <person name="Deguchi T."/>
        </authorList>
    </citation>
    <scope>NUCLEOTIDE SEQUENCE [MRNA]</scope>
    <source>
        <strain>White leghorn</strain>
        <tissue>Pineal gland</tissue>
    </source>
</reference>
<evidence type="ECO:0000250" key="1"/>
<evidence type="ECO:0000305" key="2"/>
<dbReference type="EC" id="2.3.1.5"/>
<dbReference type="EMBL" id="X16021">
    <property type="protein sequence ID" value="CAA34153.1"/>
    <property type="molecule type" value="mRNA"/>
</dbReference>
<dbReference type="PIR" id="S06653">
    <property type="entry name" value="XYCHY0"/>
</dbReference>
<dbReference type="RefSeq" id="NP_990671.1">
    <property type="nucleotide sequence ID" value="NM_205340.1"/>
</dbReference>
<dbReference type="SMR" id="P13913"/>
<dbReference type="FunCoup" id="P13913">
    <property type="interactions" value="27"/>
</dbReference>
<dbReference type="STRING" id="9031.ENSGALP00000008780"/>
<dbReference type="PaxDb" id="9031-ENSGALP00000008780"/>
<dbReference type="GeneID" id="396283"/>
<dbReference type="KEGG" id="gga:396283"/>
<dbReference type="CTD" id="396283"/>
<dbReference type="VEuPathDB" id="HostDB:geneid_396283"/>
<dbReference type="eggNOG" id="ENOG502RD0D">
    <property type="taxonomic scope" value="Eukaryota"/>
</dbReference>
<dbReference type="InParanoid" id="P13913"/>
<dbReference type="OrthoDB" id="10260017at2759"/>
<dbReference type="PhylomeDB" id="P13913"/>
<dbReference type="PRO" id="PR:P13913"/>
<dbReference type="Proteomes" id="UP000000539">
    <property type="component" value="Unassembled WGS sequence"/>
</dbReference>
<dbReference type="GO" id="GO:0004060">
    <property type="term" value="F:arylamine N-acetyltransferase activity"/>
    <property type="evidence" value="ECO:0000318"/>
    <property type="project" value="GO_Central"/>
</dbReference>
<dbReference type="FunFam" id="3.30.2140.20:FF:000001">
    <property type="entry name" value="Arylamine N-acetyltransferase 1"/>
    <property type="match status" value="1"/>
</dbReference>
<dbReference type="Gene3D" id="3.30.2140.20">
    <property type="match status" value="1"/>
</dbReference>
<dbReference type="InterPro" id="IPR001447">
    <property type="entry name" value="Arylamine_N-AcTrfase"/>
</dbReference>
<dbReference type="InterPro" id="IPR053710">
    <property type="entry name" value="Arylamine_NAT_domain_sf"/>
</dbReference>
<dbReference type="InterPro" id="IPR038765">
    <property type="entry name" value="Papain-like_cys_pep_sf"/>
</dbReference>
<dbReference type="PANTHER" id="PTHR11786:SF8">
    <property type="entry name" value="ARYLAMINE N-ACETYLTRANSFERASE 1"/>
    <property type="match status" value="1"/>
</dbReference>
<dbReference type="PANTHER" id="PTHR11786">
    <property type="entry name" value="N-HYDROXYARYLAMINE O-ACETYLTRANSFERASE"/>
    <property type="match status" value="1"/>
</dbReference>
<dbReference type="Pfam" id="PF00797">
    <property type="entry name" value="Acetyltransf_2"/>
    <property type="match status" value="1"/>
</dbReference>
<dbReference type="PRINTS" id="PR01543">
    <property type="entry name" value="ANATRNSFRASE"/>
</dbReference>
<dbReference type="SUPFAM" id="SSF54001">
    <property type="entry name" value="Cysteine proteinases"/>
    <property type="match status" value="1"/>
</dbReference>
<keyword id="KW-0012">Acyltransferase</keyword>
<keyword id="KW-1185">Reference proteome</keyword>
<keyword id="KW-0808">Transferase</keyword>
<accession>P13913</accession>
<name>ARY1_CHICK</name>